<sequence length="109" mass="11906">MSEQRDILKALAEVLEERRQADPATSYVAKLHHKGLDAILKKVGEEATEAVVAAKGGDRSQVIYETADLWFHSLIMLSACDAGPDDVLAELERRFGLSGIDEKAARNGQ</sequence>
<organism>
    <name type="scientific">Alkalilimnicola ehrlichii (strain ATCC BAA-1101 / DSM 17681 / MLHE-1)</name>
    <dbReference type="NCBI Taxonomy" id="187272"/>
    <lineage>
        <taxon>Bacteria</taxon>
        <taxon>Pseudomonadati</taxon>
        <taxon>Pseudomonadota</taxon>
        <taxon>Gammaproteobacteria</taxon>
        <taxon>Chromatiales</taxon>
        <taxon>Ectothiorhodospiraceae</taxon>
        <taxon>Alkalilimnicola</taxon>
    </lineage>
</organism>
<reference key="1">
    <citation type="submission" date="2006-08" db="EMBL/GenBank/DDBJ databases">
        <title>Complete sequence of Alkalilimnicola ehrilichei MLHE-1.</title>
        <authorList>
            <person name="Copeland A."/>
            <person name="Lucas S."/>
            <person name="Lapidus A."/>
            <person name="Barry K."/>
            <person name="Detter J.C."/>
            <person name="Glavina del Rio T."/>
            <person name="Hammon N."/>
            <person name="Israni S."/>
            <person name="Dalin E."/>
            <person name="Tice H."/>
            <person name="Pitluck S."/>
            <person name="Sims D."/>
            <person name="Brettin T."/>
            <person name="Bruce D."/>
            <person name="Han C."/>
            <person name="Tapia R."/>
            <person name="Gilna P."/>
            <person name="Schmutz J."/>
            <person name="Larimer F."/>
            <person name="Land M."/>
            <person name="Hauser L."/>
            <person name="Kyrpides N."/>
            <person name="Mikhailova N."/>
            <person name="Oremland R.S."/>
            <person name="Hoeft S.E."/>
            <person name="Switzer-Blum J."/>
            <person name="Kulp T."/>
            <person name="King G."/>
            <person name="Tabita R."/>
            <person name="Witte B."/>
            <person name="Santini J.M."/>
            <person name="Basu P."/>
            <person name="Hollibaugh J.T."/>
            <person name="Xie G."/>
            <person name="Stolz J.F."/>
            <person name="Richardson P."/>
        </authorList>
    </citation>
    <scope>NUCLEOTIDE SEQUENCE [LARGE SCALE GENOMIC DNA]</scope>
    <source>
        <strain>ATCC BAA-1101 / DSM 17681 / MLHE-1</strain>
    </source>
</reference>
<comment type="catalytic activity">
    <reaction evidence="1">
        <text>1-(5-phospho-beta-D-ribosyl)-ATP + H2O = 1-(5-phospho-beta-D-ribosyl)-5'-AMP + diphosphate + H(+)</text>
        <dbReference type="Rhea" id="RHEA:22828"/>
        <dbReference type="ChEBI" id="CHEBI:15377"/>
        <dbReference type="ChEBI" id="CHEBI:15378"/>
        <dbReference type="ChEBI" id="CHEBI:33019"/>
        <dbReference type="ChEBI" id="CHEBI:59457"/>
        <dbReference type="ChEBI" id="CHEBI:73183"/>
        <dbReference type="EC" id="3.6.1.31"/>
    </reaction>
</comment>
<comment type="pathway">
    <text evidence="1">Amino-acid biosynthesis; L-histidine biosynthesis; L-histidine from 5-phospho-alpha-D-ribose 1-diphosphate: step 2/9.</text>
</comment>
<comment type="subcellular location">
    <subcellularLocation>
        <location evidence="1">Cytoplasm</location>
    </subcellularLocation>
</comment>
<comment type="similarity">
    <text evidence="1">Belongs to the PRA-PH family.</text>
</comment>
<evidence type="ECO:0000255" key="1">
    <source>
        <dbReference type="HAMAP-Rule" id="MF_01020"/>
    </source>
</evidence>
<feature type="chain" id="PRO_1000063321" description="Phosphoribosyl-ATP pyrophosphatase">
    <location>
        <begin position="1"/>
        <end position="109"/>
    </location>
</feature>
<protein>
    <recommendedName>
        <fullName evidence="1">Phosphoribosyl-ATP pyrophosphatase</fullName>
        <shortName evidence="1">PRA-PH</shortName>
        <ecNumber evidence="1">3.6.1.31</ecNumber>
    </recommendedName>
</protein>
<dbReference type="EC" id="3.6.1.31" evidence="1"/>
<dbReference type="EMBL" id="CP000453">
    <property type="protein sequence ID" value="ABI57953.1"/>
    <property type="molecule type" value="Genomic_DNA"/>
</dbReference>
<dbReference type="RefSeq" id="WP_011630346.1">
    <property type="nucleotide sequence ID" value="NC_008340.1"/>
</dbReference>
<dbReference type="SMR" id="Q0A5D4"/>
<dbReference type="KEGG" id="aeh:Mlg_2613"/>
<dbReference type="eggNOG" id="COG0140">
    <property type="taxonomic scope" value="Bacteria"/>
</dbReference>
<dbReference type="HOGENOM" id="CLU_123337_1_2_6"/>
<dbReference type="OrthoDB" id="9814738at2"/>
<dbReference type="UniPathway" id="UPA00031">
    <property type="reaction ID" value="UER00007"/>
</dbReference>
<dbReference type="Proteomes" id="UP000001962">
    <property type="component" value="Chromosome"/>
</dbReference>
<dbReference type="GO" id="GO:0005737">
    <property type="term" value="C:cytoplasm"/>
    <property type="evidence" value="ECO:0007669"/>
    <property type="project" value="UniProtKB-SubCell"/>
</dbReference>
<dbReference type="GO" id="GO:0005524">
    <property type="term" value="F:ATP binding"/>
    <property type="evidence" value="ECO:0007669"/>
    <property type="project" value="UniProtKB-KW"/>
</dbReference>
<dbReference type="GO" id="GO:0004636">
    <property type="term" value="F:phosphoribosyl-ATP diphosphatase activity"/>
    <property type="evidence" value="ECO:0007669"/>
    <property type="project" value="UniProtKB-UniRule"/>
</dbReference>
<dbReference type="GO" id="GO:0000105">
    <property type="term" value="P:L-histidine biosynthetic process"/>
    <property type="evidence" value="ECO:0007669"/>
    <property type="project" value="UniProtKB-UniRule"/>
</dbReference>
<dbReference type="CDD" id="cd11534">
    <property type="entry name" value="NTP-PPase_HisIE_like"/>
    <property type="match status" value="1"/>
</dbReference>
<dbReference type="Gene3D" id="1.10.287.1080">
    <property type="entry name" value="MazG-like"/>
    <property type="match status" value="1"/>
</dbReference>
<dbReference type="HAMAP" id="MF_01020">
    <property type="entry name" value="HisE"/>
    <property type="match status" value="1"/>
</dbReference>
<dbReference type="InterPro" id="IPR008179">
    <property type="entry name" value="HisE"/>
</dbReference>
<dbReference type="InterPro" id="IPR021130">
    <property type="entry name" value="PRib-ATP_PPHydrolase-like"/>
</dbReference>
<dbReference type="NCBIfam" id="TIGR03188">
    <property type="entry name" value="histidine_hisI"/>
    <property type="match status" value="1"/>
</dbReference>
<dbReference type="NCBIfam" id="NF001611">
    <property type="entry name" value="PRK00400.1-3"/>
    <property type="match status" value="1"/>
</dbReference>
<dbReference type="PANTHER" id="PTHR42945">
    <property type="entry name" value="HISTIDINE BIOSYNTHESIS BIFUNCTIONAL PROTEIN"/>
    <property type="match status" value="1"/>
</dbReference>
<dbReference type="PANTHER" id="PTHR42945:SF9">
    <property type="entry name" value="HISTIDINE BIOSYNTHESIS BIFUNCTIONAL PROTEIN HISIE"/>
    <property type="match status" value="1"/>
</dbReference>
<dbReference type="Pfam" id="PF01503">
    <property type="entry name" value="PRA-PH"/>
    <property type="match status" value="1"/>
</dbReference>
<dbReference type="SUPFAM" id="SSF101386">
    <property type="entry name" value="all-alpha NTP pyrophosphatases"/>
    <property type="match status" value="1"/>
</dbReference>
<gene>
    <name evidence="1" type="primary">hisE</name>
    <name type="ordered locus">Mlg_2613</name>
</gene>
<proteinExistence type="inferred from homology"/>
<keyword id="KW-0028">Amino-acid biosynthesis</keyword>
<keyword id="KW-0067">ATP-binding</keyword>
<keyword id="KW-0963">Cytoplasm</keyword>
<keyword id="KW-0368">Histidine biosynthesis</keyword>
<keyword id="KW-0378">Hydrolase</keyword>
<keyword id="KW-0547">Nucleotide-binding</keyword>
<keyword id="KW-1185">Reference proteome</keyword>
<accession>Q0A5D4</accession>
<name>HIS2_ALKEH</name>